<keyword id="KW-0378">Hydrolase</keyword>
<keyword id="KW-0479">Metal-binding</keyword>
<keyword id="KW-0862">Zinc</keyword>
<evidence type="ECO:0000255" key="1">
    <source>
        <dbReference type="HAMAP-Rule" id="MF_01558"/>
    </source>
</evidence>
<evidence type="ECO:0000255" key="2">
    <source>
        <dbReference type="PROSITE-ProRule" id="PRU01083"/>
    </source>
</evidence>
<proteinExistence type="inferred from homology"/>
<reference key="1">
    <citation type="journal article" date="2006" name="Mol. Microbiol.">
        <title>Role of pathogenicity island-associated integrases in the genome plasticity of uropathogenic Escherichia coli strain 536.</title>
        <authorList>
            <person name="Hochhut B."/>
            <person name="Wilde C."/>
            <person name="Balling G."/>
            <person name="Middendorf B."/>
            <person name="Dobrindt U."/>
            <person name="Brzuszkiewicz E."/>
            <person name="Gottschalk G."/>
            <person name="Carniel E."/>
            <person name="Hacker J."/>
        </authorList>
    </citation>
    <scope>NUCLEOTIDE SEQUENCE [LARGE SCALE GENOMIC DNA]</scope>
    <source>
        <strain>536 / UPEC</strain>
    </source>
</reference>
<protein>
    <recommendedName>
        <fullName evidence="1">Cytidine deaminase</fullName>
        <ecNumber evidence="1">3.5.4.5</ecNumber>
    </recommendedName>
    <alternativeName>
        <fullName evidence="1">Cytidine aminohydrolase</fullName>
        <shortName evidence="1">CDA</shortName>
    </alternativeName>
</protein>
<feature type="chain" id="PRO_1000068951" description="Cytidine deaminase">
    <location>
        <begin position="1"/>
        <end position="294"/>
    </location>
</feature>
<feature type="domain" description="CMP/dCMP-type deaminase 1" evidence="2">
    <location>
        <begin position="48"/>
        <end position="168"/>
    </location>
</feature>
<feature type="domain" description="CMP/dCMP-type deaminase 2" evidence="2">
    <location>
        <begin position="186"/>
        <end position="294"/>
    </location>
</feature>
<feature type="active site" description="Proton donor" evidence="1">
    <location>
        <position position="104"/>
    </location>
</feature>
<feature type="binding site" evidence="1">
    <location>
        <begin position="89"/>
        <end position="91"/>
    </location>
    <ligand>
        <name>substrate</name>
    </ligand>
</feature>
<feature type="binding site" evidence="1">
    <location>
        <position position="102"/>
    </location>
    <ligand>
        <name>Zn(2+)</name>
        <dbReference type="ChEBI" id="CHEBI:29105"/>
        <note>catalytic</note>
    </ligand>
</feature>
<feature type="binding site" evidence="1">
    <location>
        <position position="129"/>
    </location>
    <ligand>
        <name>Zn(2+)</name>
        <dbReference type="ChEBI" id="CHEBI:29105"/>
        <note>catalytic</note>
    </ligand>
</feature>
<feature type="binding site" evidence="1">
    <location>
        <position position="132"/>
    </location>
    <ligand>
        <name>Zn(2+)</name>
        <dbReference type="ChEBI" id="CHEBI:29105"/>
        <note>catalytic</note>
    </ligand>
</feature>
<organism>
    <name type="scientific">Escherichia coli O6:K15:H31 (strain 536 / UPEC)</name>
    <dbReference type="NCBI Taxonomy" id="362663"/>
    <lineage>
        <taxon>Bacteria</taxon>
        <taxon>Pseudomonadati</taxon>
        <taxon>Pseudomonadota</taxon>
        <taxon>Gammaproteobacteria</taxon>
        <taxon>Enterobacterales</taxon>
        <taxon>Enterobacteriaceae</taxon>
        <taxon>Escherichia</taxon>
    </lineage>
</organism>
<accession>Q0TFU8</accession>
<name>CDD_ECOL5</name>
<gene>
    <name evidence="1" type="primary">cdd</name>
    <name type="ordered locus">ECP_2182</name>
</gene>
<sequence>MHPRFQTAFAQLADNLQSALEPILADKYFPALLTGEQVSSLKSATGLDEDALAFALLPLAAACARTPLSNFNVGAIARGVSGTWYFGANMEFIGATMQQTVHAEQSAISHAWLSGEKALAAITVNYTPCGHCRQFMNELNSGLDLRIHLPGREAHALRDYLPDAFGPKDLEIKTLLMDEQDHGYALTGDALSQAAIAAANRSHMPYSKSPSGVALECKDGRIFSGSYAENAAFNPTLPPLQGALILLNLKGYDYPDIQRAVLAEKADAPLIQWDATSATLKALGCHNIDRVLLA</sequence>
<dbReference type="EC" id="3.5.4.5" evidence="1"/>
<dbReference type="EMBL" id="CP000247">
    <property type="protein sequence ID" value="ABG70181.1"/>
    <property type="molecule type" value="Genomic_DNA"/>
</dbReference>
<dbReference type="RefSeq" id="WP_000553553.1">
    <property type="nucleotide sequence ID" value="NC_008253.1"/>
</dbReference>
<dbReference type="SMR" id="Q0TFU8"/>
<dbReference type="KEGG" id="ecp:ECP_2182"/>
<dbReference type="HOGENOM" id="CLU_052424_0_0_6"/>
<dbReference type="Proteomes" id="UP000009182">
    <property type="component" value="Chromosome"/>
</dbReference>
<dbReference type="GO" id="GO:0005829">
    <property type="term" value="C:cytosol"/>
    <property type="evidence" value="ECO:0007669"/>
    <property type="project" value="TreeGrafter"/>
</dbReference>
<dbReference type="GO" id="GO:0004126">
    <property type="term" value="F:cytidine deaminase activity"/>
    <property type="evidence" value="ECO:0007669"/>
    <property type="project" value="UniProtKB-UniRule"/>
</dbReference>
<dbReference type="GO" id="GO:0042802">
    <property type="term" value="F:identical protein binding"/>
    <property type="evidence" value="ECO:0007669"/>
    <property type="project" value="UniProtKB-ARBA"/>
</dbReference>
<dbReference type="GO" id="GO:0008270">
    <property type="term" value="F:zinc ion binding"/>
    <property type="evidence" value="ECO:0007669"/>
    <property type="project" value="UniProtKB-UniRule"/>
</dbReference>
<dbReference type="GO" id="GO:0009972">
    <property type="term" value="P:cytidine deamination"/>
    <property type="evidence" value="ECO:0007669"/>
    <property type="project" value="InterPro"/>
</dbReference>
<dbReference type="CDD" id="cd01283">
    <property type="entry name" value="cytidine_deaminase"/>
    <property type="match status" value="2"/>
</dbReference>
<dbReference type="FunFam" id="3.40.140.10:FF:000006">
    <property type="entry name" value="Cytidine deaminase"/>
    <property type="match status" value="1"/>
</dbReference>
<dbReference type="FunFam" id="3.40.140.10:FF:000007">
    <property type="entry name" value="Cytidine deaminase"/>
    <property type="match status" value="1"/>
</dbReference>
<dbReference type="Gene3D" id="3.40.140.10">
    <property type="entry name" value="Cytidine Deaminase, domain 2"/>
    <property type="match status" value="2"/>
</dbReference>
<dbReference type="HAMAP" id="MF_01558">
    <property type="entry name" value="Cyt_deam"/>
    <property type="match status" value="1"/>
</dbReference>
<dbReference type="InterPro" id="IPR016192">
    <property type="entry name" value="APOBEC/CMP_deaminase_Zn-bd"/>
</dbReference>
<dbReference type="InterPro" id="IPR002125">
    <property type="entry name" value="CMP_dCMP_dom"/>
</dbReference>
<dbReference type="InterPro" id="IPR013171">
    <property type="entry name" value="Cyd/dCyd_deaminase_Zn-bd"/>
</dbReference>
<dbReference type="InterPro" id="IPR050202">
    <property type="entry name" value="Cyt/Deoxycyt_deaminase"/>
</dbReference>
<dbReference type="InterPro" id="IPR006263">
    <property type="entry name" value="Cyt_deam_dimer"/>
</dbReference>
<dbReference type="InterPro" id="IPR016193">
    <property type="entry name" value="Cytidine_deaminase-like"/>
</dbReference>
<dbReference type="InterPro" id="IPR020797">
    <property type="entry name" value="Cytidine_deaminase_bacteria"/>
</dbReference>
<dbReference type="NCBIfam" id="TIGR01355">
    <property type="entry name" value="cyt_deam_dimer"/>
    <property type="match status" value="1"/>
</dbReference>
<dbReference type="NCBIfam" id="NF006537">
    <property type="entry name" value="PRK09027.1"/>
    <property type="match status" value="1"/>
</dbReference>
<dbReference type="PANTHER" id="PTHR11644">
    <property type="entry name" value="CYTIDINE DEAMINASE"/>
    <property type="match status" value="1"/>
</dbReference>
<dbReference type="PANTHER" id="PTHR11644:SF2">
    <property type="entry name" value="CYTIDINE DEAMINASE"/>
    <property type="match status" value="1"/>
</dbReference>
<dbReference type="Pfam" id="PF00383">
    <property type="entry name" value="dCMP_cyt_deam_1"/>
    <property type="match status" value="1"/>
</dbReference>
<dbReference type="Pfam" id="PF08211">
    <property type="entry name" value="dCMP_cyt_deam_2"/>
    <property type="match status" value="1"/>
</dbReference>
<dbReference type="PIRSF" id="PIRSF006334">
    <property type="entry name" value="Cdd_plus_pseudo"/>
    <property type="match status" value="1"/>
</dbReference>
<dbReference type="SUPFAM" id="SSF53927">
    <property type="entry name" value="Cytidine deaminase-like"/>
    <property type="match status" value="2"/>
</dbReference>
<dbReference type="PROSITE" id="PS00903">
    <property type="entry name" value="CYT_DCMP_DEAMINASES_1"/>
    <property type="match status" value="1"/>
</dbReference>
<dbReference type="PROSITE" id="PS51747">
    <property type="entry name" value="CYT_DCMP_DEAMINASES_2"/>
    <property type="match status" value="2"/>
</dbReference>
<comment type="function">
    <text evidence="1">This enzyme scavenges exogenous and endogenous cytidine and 2'-deoxycytidine for UMP synthesis.</text>
</comment>
<comment type="catalytic activity">
    <reaction evidence="1">
        <text>cytidine + H2O + H(+) = uridine + NH4(+)</text>
        <dbReference type="Rhea" id="RHEA:16069"/>
        <dbReference type="ChEBI" id="CHEBI:15377"/>
        <dbReference type="ChEBI" id="CHEBI:15378"/>
        <dbReference type="ChEBI" id="CHEBI:16704"/>
        <dbReference type="ChEBI" id="CHEBI:17562"/>
        <dbReference type="ChEBI" id="CHEBI:28938"/>
        <dbReference type="EC" id="3.5.4.5"/>
    </reaction>
</comment>
<comment type="catalytic activity">
    <reaction evidence="1">
        <text>2'-deoxycytidine + H2O + H(+) = 2'-deoxyuridine + NH4(+)</text>
        <dbReference type="Rhea" id="RHEA:13433"/>
        <dbReference type="ChEBI" id="CHEBI:15377"/>
        <dbReference type="ChEBI" id="CHEBI:15378"/>
        <dbReference type="ChEBI" id="CHEBI:15698"/>
        <dbReference type="ChEBI" id="CHEBI:16450"/>
        <dbReference type="ChEBI" id="CHEBI:28938"/>
        <dbReference type="EC" id="3.5.4.5"/>
    </reaction>
</comment>
<comment type="cofactor">
    <cofactor evidence="1">
        <name>Zn(2+)</name>
        <dbReference type="ChEBI" id="CHEBI:29105"/>
    </cofactor>
    <text evidence="1">Binds 1 zinc ion.</text>
</comment>
<comment type="subunit">
    <text evidence="1">Homodimer.</text>
</comment>
<comment type="similarity">
    <text evidence="1">Belongs to the cytidine and deoxycytidylate deaminase family.</text>
</comment>